<comment type="function">
    <text evidence="1">Transcriptional activator that binds specifically to the DNA sequence 5'-[AG]CCGAC-3'. Binding to the C-repeat/DRE element mediates high salinity- and dehydration-inducible transcription (By similarity).</text>
</comment>
<comment type="subcellular location">
    <subcellularLocation>
        <location evidence="4">Nucleus</location>
    </subcellularLocation>
</comment>
<comment type="similarity">
    <text evidence="4">Belongs to the AP2/ERF transcription factor family. ERF subfamily.</text>
</comment>
<comment type="sequence caution" evidence="4">
    <conflict type="erroneous gene model prediction">
        <sequence resource="EMBL-CDS" id="BAD46703"/>
    </conflict>
</comment>
<name>DRE1H_ORYSJ</name>
<protein>
    <recommendedName>
        <fullName>Dehydration-responsive element-binding protein 1H</fullName>
        <shortName>Protein DREB1H</shortName>
    </recommendedName>
</protein>
<sequence length="246" mass="25491">MDMAGHEVNSSSSSSGAESSSSSSGRQQYKKRPAGRTKFRETRHPVYRGVRRRGGAGRWVCEVRVPGKRGARLWLGTYVTAEAAARAHDAAMIALRGGAGGGGAACLNFQDSAWLLAVPPAAPSDLAGVRRAATEAVAGFLQRNKTTNGASVAEAMDEATSGVSAPPPLANNAGSSETPGPSSIDGTADTAAGAALDMFELDFFGEMDYDTYYASLAEGLLMEPPPAATALWDNGDEGADIALWSY</sequence>
<dbReference type="EMBL" id="AP006859">
    <property type="protein sequence ID" value="BAD46703.1"/>
    <property type="status" value="ALT_SEQ"/>
    <property type="molecule type" value="Genomic_DNA"/>
</dbReference>
<dbReference type="EMBL" id="AP008215">
    <property type="protein sequence ID" value="BAF25625.1"/>
    <property type="molecule type" value="Genomic_DNA"/>
</dbReference>
<dbReference type="EMBL" id="AP014965">
    <property type="protein sequence ID" value="BAT09025.1"/>
    <property type="molecule type" value="Genomic_DNA"/>
</dbReference>
<dbReference type="RefSeq" id="XP_015611305.1">
    <property type="nucleotide sequence ID" value="XM_015755819.1"/>
</dbReference>
<dbReference type="SMR" id="Q0J090"/>
<dbReference type="FunCoup" id="Q0J090">
    <property type="interactions" value="31"/>
</dbReference>
<dbReference type="STRING" id="39947.Q0J090"/>
<dbReference type="PaxDb" id="39947-Q0J090"/>
<dbReference type="EnsemblPlants" id="Os09t0522100-00">
    <property type="protein sequence ID" value="Os09t0522100-00"/>
    <property type="gene ID" value="Os09g0522100"/>
</dbReference>
<dbReference type="Gramene" id="Os09t0522100-00">
    <property type="protein sequence ID" value="Os09t0522100-00"/>
    <property type="gene ID" value="Os09g0522100"/>
</dbReference>
<dbReference type="KEGG" id="dosa:Os09g0522100"/>
<dbReference type="eggNOG" id="ENOG502SNA4">
    <property type="taxonomic scope" value="Eukaryota"/>
</dbReference>
<dbReference type="HOGENOM" id="CLU_063331_1_0_1"/>
<dbReference type="InParanoid" id="Q0J090"/>
<dbReference type="OMA" id="MAGHELN"/>
<dbReference type="OrthoDB" id="778167at2759"/>
<dbReference type="Proteomes" id="UP000000763">
    <property type="component" value="Chromosome 9"/>
</dbReference>
<dbReference type="Proteomes" id="UP000059680">
    <property type="component" value="Chromosome 9"/>
</dbReference>
<dbReference type="GO" id="GO:0005634">
    <property type="term" value="C:nucleus"/>
    <property type="evidence" value="ECO:0007669"/>
    <property type="project" value="UniProtKB-SubCell"/>
</dbReference>
<dbReference type="GO" id="GO:0003677">
    <property type="term" value="F:DNA binding"/>
    <property type="evidence" value="ECO:0007669"/>
    <property type="project" value="UniProtKB-KW"/>
</dbReference>
<dbReference type="GO" id="GO:0003700">
    <property type="term" value="F:DNA-binding transcription factor activity"/>
    <property type="evidence" value="ECO:0007669"/>
    <property type="project" value="InterPro"/>
</dbReference>
<dbReference type="Gene3D" id="3.30.730.10">
    <property type="entry name" value="AP2/ERF domain"/>
    <property type="match status" value="1"/>
</dbReference>
<dbReference type="InterPro" id="IPR001471">
    <property type="entry name" value="AP2/ERF_dom"/>
</dbReference>
<dbReference type="InterPro" id="IPR036955">
    <property type="entry name" value="AP2/ERF_dom_sf"/>
</dbReference>
<dbReference type="InterPro" id="IPR016177">
    <property type="entry name" value="DNA-bd_dom_sf"/>
</dbReference>
<dbReference type="InterPro" id="IPR045277">
    <property type="entry name" value="DRE1A-I"/>
</dbReference>
<dbReference type="PANTHER" id="PTHR31839">
    <property type="entry name" value="DEHYDRATION-RESPONSIVE ELEMENT-BINDING PROTEIN 1D"/>
    <property type="match status" value="1"/>
</dbReference>
<dbReference type="PANTHER" id="PTHR31839:SF31">
    <property type="entry name" value="DEHYDRATION-RESPONSIVE ELEMENT-BINDING PROTEIN 1H"/>
    <property type="match status" value="1"/>
</dbReference>
<dbReference type="Pfam" id="PF00847">
    <property type="entry name" value="AP2"/>
    <property type="match status" value="1"/>
</dbReference>
<dbReference type="PRINTS" id="PR00367">
    <property type="entry name" value="ETHRSPELEMNT"/>
</dbReference>
<dbReference type="SMART" id="SM00380">
    <property type="entry name" value="AP2"/>
    <property type="match status" value="1"/>
</dbReference>
<dbReference type="SUPFAM" id="SSF54171">
    <property type="entry name" value="DNA-binding domain"/>
    <property type="match status" value="1"/>
</dbReference>
<dbReference type="PROSITE" id="PS51032">
    <property type="entry name" value="AP2_ERF"/>
    <property type="match status" value="1"/>
</dbReference>
<proteinExistence type="inferred from homology"/>
<accession>Q0J090</accession>
<accession>A0A0P0XPI4</accession>
<accession>Q64MA2</accession>
<organism>
    <name type="scientific">Oryza sativa subsp. japonica</name>
    <name type="common">Rice</name>
    <dbReference type="NCBI Taxonomy" id="39947"/>
    <lineage>
        <taxon>Eukaryota</taxon>
        <taxon>Viridiplantae</taxon>
        <taxon>Streptophyta</taxon>
        <taxon>Embryophyta</taxon>
        <taxon>Tracheophyta</taxon>
        <taxon>Spermatophyta</taxon>
        <taxon>Magnoliopsida</taxon>
        <taxon>Liliopsida</taxon>
        <taxon>Poales</taxon>
        <taxon>Poaceae</taxon>
        <taxon>BOP clade</taxon>
        <taxon>Oryzoideae</taxon>
        <taxon>Oryzeae</taxon>
        <taxon>Oryzinae</taxon>
        <taxon>Oryza</taxon>
        <taxon>Oryza sativa</taxon>
    </lineage>
</organism>
<feature type="chain" id="PRO_0000323046" description="Dehydration-responsive element-binding protein 1H">
    <location>
        <begin position="1"/>
        <end position="246"/>
    </location>
</feature>
<feature type="DNA-binding region" description="AP2/ERF" evidence="2">
    <location>
        <begin position="46"/>
        <end position="110"/>
    </location>
</feature>
<feature type="region of interest" description="Disordered" evidence="3">
    <location>
        <begin position="1"/>
        <end position="43"/>
    </location>
</feature>
<feature type="region of interest" description="Disordered" evidence="3">
    <location>
        <begin position="155"/>
        <end position="187"/>
    </location>
</feature>
<feature type="compositionally biased region" description="Low complexity" evidence="3">
    <location>
        <begin position="10"/>
        <end position="24"/>
    </location>
</feature>
<feature type="compositionally biased region" description="Basic residues" evidence="3">
    <location>
        <begin position="28"/>
        <end position="37"/>
    </location>
</feature>
<feature type="compositionally biased region" description="Polar residues" evidence="3">
    <location>
        <begin position="172"/>
        <end position="181"/>
    </location>
</feature>
<evidence type="ECO:0000250" key="1"/>
<evidence type="ECO:0000255" key="2">
    <source>
        <dbReference type="PROSITE-ProRule" id="PRU00366"/>
    </source>
</evidence>
<evidence type="ECO:0000256" key="3">
    <source>
        <dbReference type="SAM" id="MobiDB-lite"/>
    </source>
</evidence>
<evidence type="ECO:0000305" key="4"/>
<gene>
    <name type="primary">DREB1H</name>
    <name type="synonym">ERF133</name>
    <name type="ordered locus">Os09g0522100</name>
    <name type="ordered locus">LOC_Os09g35020</name>
    <name type="ORF">OSJNOa273B05.9</name>
</gene>
<reference key="1">
    <citation type="journal article" date="2005" name="Nature">
        <title>The map-based sequence of the rice genome.</title>
        <authorList>
            <consortium name="International rice genome sequencing project (IRGSP)"/>
        </authorList>
    </citation>
    <scope>NUCLEOTIDE SEQUENCE [LARGE SCALE GENOMIC DNA]</scope>
    <source>
        <strain>cv. Nipponbare</strain>
    </source>
</reference>
<reference key="2">
    <citation type="journal article" date="2008" name="Nucleic Acids Res.">
        <title>The rice annotation project database (RAP-DB): 2008 update.</title>
        <authorList>
            <consortium name="The rice annotation project (RAP)"/>
        </authorList>
    </citation>
    <scope>GENOME REANNOTATION</scope>
    <source>
        <strain>cv. Nipponbare</strain>
    </source>
</reference>
<reference key="3">
    <citation type="journal article" date="2013" name="Rice">
        <title>Improvement of the Oryza sativa Nipponbare reference genome using next generation sequence and optical map data.</title>
        <authorList>
            <person name="Kawahara Y."/>
            <person name="de la Bastide M."/>
            <person name="Hamilton J.P."/>
            <person name="Kanamori H."/>
            <person name="McCombie W.R."/>
            <person name="Ouyang S."/>
            <person name="Schwartz D.C."/>
            <person name="Tanaka T."/>
            <person name="Wu J."/>
            <person name="Zhou S."/>
            <person name="Childs K.L."/>
            <person name="Davidson R.M."/>
            <person name="Lin H."/>
            <person name="Quesada-Ocampo L."/>
            <person name="Vaillancourt B."/>
            <person name="Sakai H."/>
            <person name="Lee S.S."/>
            <person name="Kim J."/>
            <person name="Numa H."/>
            <person name="Itoh T."/>
            <person name="Buell C.R."/>
            <person name="Matsumoto T."/>
        </authorList>
    </citation>
    <scope>GENOME REANNOTATION</scope>
    <source>
        <strain>cv. Nipponbare</strain>
    </source>
</reference>
<reference key="4">
    <citation type="journal article" date="2005" name="Plant Mol. Biol.">
        <title>Structural, functional, and phylogenetic characterization of a large CBF gene family in barley.</title>
        <authorList>
            <person name="Skinner J.S."/>
            <person name="von Zitzewitz J."/>
            <person name="Szuecs P."/>
            <person name="Marquez-Cedillo L."/>
            <person name="Filichkin T."/>
            <person name="Amundsen K."/>
            <person name="Stockinger E.J."/>
            <person name="Thomashow M.F."/>
            <person name="Chen T.H.H."/>
            <person name="Hayes P.M."/>
        </authorList>
    </citation>
    <scope>GENE FAMILY</scope>
    <source>
        <strain>cv. Nipponbare</strain>
    </source>
</reference>
<reference key="5">
    <citation type="journal article" date="2006" name="Plant Physiol.">
        <title>Genome-wide analysis of the ERF gene family in Arabidopsis and rice.</title>
        <authorList>
            <person name="Nakano T."/>
            <person name="Suzuki K."/>
            <person name="Fujimura T."/>
            <person name="Shinshi H."/>
        </authorList>
    </citation>
    <scope>GENE FAMILY</scope>
    <scope>NOMENCLATURE</scope>
</reference>
<keyword id="KW-0010">Activator</keyword>
<keyword id="KW-0238">DNA-binding</keyword>
<keyword id="KW-0539">Nucleus</keyword>
<keyword id="KW-1185">Reference proteome</keyword>
<keyword id="KW-0346">Stress response</keyword>
<keyword id="KW-0804">Transcription</keyword>
<keyword id="KW-0805">Transcription regulation</keyword>